<proteinExistence type="evidence at protein level"/>
<evidence type="ECO:0000250" key="1"/>
<evidence type="ECO:0000250" key="2">
    <source>
        <dbReference type="UniProtKB" id="O96000"/>
    </source>
</evidence>
<evidence type="ECO:0000255" key="3"/>
<evidence type="ECO:0000269" key="4">
    <source>
    </source>
</evidence>
<evidence type="ECO:0000305" key="5"/>
<evidence type="ECO:0000312" key="6">
    <source>
        <dbReference type="EMBL" id="ABF51473.1"/>
    </source>
</evidence>
<name>NDUBA_BOMMO</name>
<sequence>MVQDGNPPDDNVFRAFCNALYNTVDAPVTWFRETVVEPNQKKYPWYHQNYRRVPTIDQCYDDDVVCDFEANAQFKRDRAVDSEILSILRQRYEDCMMYEQPDHATKCRSLWDKYKSAEEAWFIKYGDLGAYGDARKAYMKQKHRMVWERRNGPLSDLTK</sequence>
<comment type="function">
    <text evidence="1">Accessory subunit of the mitochondrial membrane respiratory chain NADH dehydrogenase (Complex I), that is believed not to be involved in catalysis. Complex I functions in the transfer of electrons from NADH to the respiratory chain. The immediate electron acceptor for the enzyme is believed to be ubiquinone (By similarity).</text>
</comment>
<comment type="subunit">
    <text evidence="2">Complex I is composed of 45 different subunits.</text>
</comment>
<comment type="subcellular location">
    <subcellularLocation>
        <location evidence="1">Mitochondrion inner membrane</location>
        <topology evidence="1">Peripheral membrane protein</topology>
        <orientation evidence="2">Matrix side</orientation>
    </subcellularLocation>
</comment>
<comment type="similarity">
    <text evidence="3">Belongs to the complex I NDUFB10 subunit family.</text>
</comment>
<organism>
    <name type="scientific">Bombyx mori</name>
    <name type="common">Silk moth</name>
    <dbReference type="NCBI Taxonomy" id="7091"/>
    <lineage>
        <taxon>Eukaryota</taxon>
        <taxon>Metazoa</taxon>
        <taxon>Ecdysozoa</taxon>
        <taxon>Arthropoda</taxon>
        <taxon>Hexapoda</taxon>
        <taxon>Insecta</taxon>
        <taxon>Pterygota</taxon>
        <taxon>Neoptera</taxon>
        <taxon>Endopterygota</taxon>
        <taxon>Lepidoptera</taxon>
        <taxon>Glossata</taxon>
        <taxon>Ditrysia</taxon>
        <taxon>Bombycoidea</taxon>
        <taxon>Bombycidae</taxon>
        <taxon>Bombycinae</taxon>
        <taxon>Bombyx</taxon>
    </lineage>
</organism>
<protein>
    <recommendedName>
        <fullName>NADH dehydrogenase [ubiquinone] 1 beta subcomplex subunit 10</fullName>
    </recommendedName>
</protein>
<accession>Q1HPL8</accession>
<accession>P82213</accession>
<feature type="chain" id="PRO_0000274554" description="NADH dehydrogenase [ubiquinone] 1 beta subcomplex subunit 10">
    <location>
        <begin position="1"/>
        <end position="159"/>
    </location>
</feature>
<keyword id="KW-0903">Direct protein sequencing</keyword>
<keyword id="KW-0249">Electron transport</keyword>
<keyword id="KW-0472">Membrane</keyword>
<keyword id="KW-0496">Mitochondrion</keyword>
<keyword id="KW-0999">Mitochondrion inner membrane</keyword>
<keyword id="KW-1185">Reference proteome</keyword>
<keyword id="KW-0679">Respiratory chain</keyword>
<keyword id="KW-0813">Transport</keyword>
<reference evidence="6" key="1">
    <citation type="submission" date="2006-03" db="EMBL/GenBank/DDBJ databases">
        <title>Blast silkworm EST database for functional genes.</title>
        <authorList>
            <person name="Niu B.L."/>
            <person name="Meng Z.Q."/>
            <person name="Weng H.B."/>
            <person name="Shen W.F."/>
            <person name="He L.H."/>
            <person name="Zheng K.F."/>
            <person name="Ye S.T."/>
            <person name="Lin T.B."/>
            <person name="Chen J.E."/>
        </authorList>
    </citation>
    <scope>NUCLEOTIDE SEQUENCE [LARGE SCALE MRNA]</scope>
</reference>
<reference evidence="5" key="2">
    <citation type="journal article" date="2001" name="Yi Chuan Xue Bao">
        <title>Protein database for several tissues derived from five instar of silkworm.</title>
        <authorList>
            <person name="Zhong B.-X."/>
        </authorList>
    </citation>
    <scope>PROTEIN SEQUENCE OF 2-25</scope>
    <source>
        <strain evidence="4">Xinhang X Keming</strain>
        <tissue evidence="4">Body wall</tissue>
        <tissue evidence="4">Fat body</tissue>
    </source>
</reference>
<dbReference type="EMBL" id="DQ443384">
    <property type="protein sequence ID" value="ABF51473.1"/>
    <property type="molecule type" value="mRNA"/>
</dbReference>
<dbReference type="RefSeq" id="NP_001040478.1">
    <property type="nucleotide sequence ID" value="NM_001047013.1"/>
</dbReference>
<dbReference type="SMR" id="Q1HPL8"/>
<dbReference type="FunCoup" id="Q1HPL8">
    <property type="interactions" value="1187"/>
</dbReference>
<dbReference type="STRING" id="7091.Q1HPL8"/>
<dbReference type="PaxDb" id="7091-BGIBMGA007267-TA"/>
<dbReference type="EnsemblMetazoa" id="NM_001047013.1">
    <property type="protein sequence ID" value="NP_001040478.1"/>
    <property type="gene ID" value="LOC733018"/>
</dbReference>
<dbReference type="GeneID" id="733018"/>
<dbReference type="KEGG" id="bmor:733018"/>
<dbReference type="CTD" id="44228"/>
<dbReference type="eggNOG" id="KOG4009">
    <property type="taxonomic scope" value="Eukaryota"/>
</dbReference>
<dbReference type="HOGENOM" id="CLU_112615_0_0_1"/>
<dbReference type="InParanoid" id="Q1HPL8"/>
<dbReference type="OMA" id="CKPILEQ"/>
<dbReference type="OrthoDB" id="173107at7088"/>
<dbReference type="Proteomes" id="UP000005204">
    <property type="component" value="Unassembled WGS sequence"/>
</dbReference>
<dbReference type="GO" id="GO:0005743">
    <property type="term" value="C:mitochondrial inner membrane"/>
    <property type="evidence" value="ECO:0007669"/>
    <property type="project" value="UniProtKB-SubCell"/>
</dbReference>
<dbReference type="GO" id="GO:0045271">
    <property type="term" value="C:respiratory chain complex I"/>
    <property type="evidence" value="ECO:0007669"/>
    <property type="project" value="UniProtKB-ARBA"/>
</dbReference>
<dbReference type="InterPro" id="IPR019377">
    <property type="entry name" value="NADH_UbQ_OxRdtase_su10"/>
</dbReference>
<dbReference type="InterPro" id="IPR039993">
    <property type="entry name" value="NDUFB10"/>
</dbReference>
<dbReference type="PANTHER" id="PTHR13094:SF1">
    <property type="entry name" value="NADH DEHYDROGENASE [UBIQUINONE] 1 BETA SUBCOMPLEX SUBUNIT 10"/>
    <property type="match status" value="1"/>
</dbReference>
<dbReference type="PANTHER" id="PTHR13094">
    <property type="entry name" value="NADH-UBIQUINONE OXIDOREDUCTASE PDSW SUBUNIT"/>
    <property type="match status" value="1"/>
</dbReference>
<dbReference type="Pfam" id="PF10249">
    <property type="entry name" value="NDUFB10"/>
    <property type="match status" value="1"/>
</dbReference>